<keyword id="KW-0687">Ribonucleoprotein</keyword>
<keyword id="KW-0689">Ribosomal protein</keyword>
<reference key="1">
    <citation type="journal article" date="2008" name="Genome Res.">
        <title>Comparative genome analysis of Salmonella enteritidis PT4 and Salmonella gallinarum 287/91 provides insights into evolutionary and host adaptation pathways.</title>
        <authorList>
            <person name="Thomson N.R."/>
            <person name="Clayton D.J."/>
            <person name="Windhorst D."/>
            <person name="Vernikos G."/>
            <person name="Davidson S."/>
            <person name="Churcher C."/>
            <person name="Quail M.A."/>
            <person name="Stevens M."/>
            <person name="Jones M.A."/>
            <person name="Watson M."/>
            <person name="Barron A."/>
            <person name="Layton A."/>
            <person name="Pickard D."/>
            <person name="Kingsley R.A."/>
            <person name="Bignell A."/>
            <person name="Clark L."/>
            <person name="Harris B."/>
            <person name="Ormond D."/>
            <person name="Abdellah Z."/>
            <person name="Brooks K."/>
            <person name="Cherevach I."/>
            <person name="Chillingworth T."/>
            <person name="Woodward J."/>
            <person name="Norberczak H."/>
            <person name="Lord A."/>
            <person name="Arrowsmith C."/>
            <person name="Jagels K."/>
            <person name="Moule S."/>
            <person name="Mungall K."/>
            <person name="Saunders M."/>
            <person name="Whitehead S."/>
            <person name="Chabalgoity J.A."/>
            <person name="Maskell D."/>
            <person name="Humphreys T."/>
            <person name="Roberts M."/>
            <person name="Barrow P.A."/>
            <person name="Dougan G."/>
            <person name="Parkhill J."/>
        </authorList>
    </citation>
    <scope>NUCLEOTIDE SEQUENCE [LARGE SCALE GENOMIC DNA]</scope>
    <source>
        <strain>P125109</strain>
    </source>
</reference>
<name>RL28_SALEP</name>
<organism>
    <name type="scientific">Salmonella enteritidis PT4 (strain P125109)</name>
    <dbReference type="NCBI Taxonomy" id="550537"/>
    <lineage>
        <taxon>Bacteria</taxon>
        <taxon>Pseudomonadati</taxon>
        <taxon>Pseudomonadota</taxon>
        <taxon>Gammaproteobacteria</taxon>
        <taxon>Enterobacterales</taxon>
        <taxon>Enterobacteriaceae</taxon>
        <taxon>Salmonella</taxon>
    </lineage>
</organism>
<dbReference type="EMBL" id="AM933172">
    <property type="protein sequence ID" value="CAR35129.1"/>
    <property type="molecule type" value="Genomic_DNA"/>
</dbReference>
<dbReference type="RefSeq" id="WP_001519051.1">
    <property type="nucleotide sequence ID" value="NC_011294.1"/>
</dbReference>
<dbReference type="SMR" id="B5R5G1"/>
<dbReference type="KEGG" id="set:SEN3550"/>
<dbReference type="HOGENOM" id="CLU_064548_3_1_6"/>
<dbReference type="Proteomes" id="UP000000613">
    <property type="component" value="Chromosome"/>
</dbReference>
<dbReference type="GO" id="GO:0022625">
    <property type="term" value="C:cytosolic large ribosomal subunit"/>
    <property type="evidence" value="ECO:0007669"/>
    <property type="project" value="TreeGrafter"/>
</dbReference>
<dbReference type="GO" id="GO:0003735">
    <property type="term" value="F:structural constituent of ribosome"/>
    <property type="evidence" value="ECO:0007669"/>
    <property type="project" value="InterPro"/>
</dbReference>
<dbReference type="GO" id="GO:0006412">
    <property type="term" value="P:translation"/>
    <property type="evidence" value="ECO:0007669"/>
    <property type="project" value="UniProtKB-UniRule"/>
</dbReference>
<dbReference type="FunFam" id="2.30.170.40:FF:000001">
    <property type="entry name" value="50S ribosomal protein L28"/>
    <property type="match status" value="1"/>
</dbReference>
<dbReference type="Gene3D" id="2.30.170.40">
    <property type="entry name" value="Ribosomal protein L28/L24"/>
    <property type="match status" value="1"/>
</dbReference>
<dbReference type="HAMAP" id="MF_00373">
    <property type="entry name" value="Ribosomal_bL28"/>
    <property type="match status" value="1"/>
</dbReference>
<dbReference type="InterPro" id="IPR026569">
    <property type="entry name" value="Ribosomal_bL28"/>
</dbReference>
<dbReference type="InterPro" id="IPR034704">
    <property type="entry name" value="Ribosomal_bL28/bL31-like_sf"/>
</dbReference>
<dbReference type="InterPro" id="IPR001383">
    <property type="entry name" value="Ribosomal_bL28_bact-type"/>
</dbReference>
<dbReference type="InterPro" id="IPR037147">
    <property type="entry name" value="Ribosomal_bL28_sf"/>
</dbReference>
<dbReference type="NCBIfam" id="TIGR00009">
    <property type="entry name" value="L28"/>
    <property type="match status" value="1"/>
</dbReference>
<dbReference type="PANTHER" id="PTHR13528">
    <property type="entry name" value="39S RIBOSOMAL PROTEIN L28, MITOCHONDRIAL"/>
    <property type="match status" value="1"/>
</dbReference>
<dbReference type="PANTHER" id="PTHR13528:SF2">
    <property type="entry name" value="LARGE RIBOSOMAL SUBUNIT PROTEIN BL28M"/>
    <property type="match status" value="1"/>
</dbReference>
<dbReference type="Pfam" id="PF00830">
    <property type="entry name" value="Ribosomal_L28"/>
    <property type="match status" value="1"/>
</dbReference>
<dbReference type="SUPFAM" id="SSF143800">
    <property type="entry name" value="L28p-like"/>
    <property type="match status" value="1"/>
</dbReference>
<feature type="chain" id="PRO_1000121682" description="Large ribosomal subunit protein bL28">
    <location>
        <begin position="1"/>
        <end position="78"/>
    </location>
</feature>
<sequence>MSRVCQVTGKRPVTGNNRSHALNATKRRFLPNLHSHRFWVESEKRFVTLRVSAKGMRIIDKKGIETVLSELRARGEKY</sequence>
<gene>
    <name evidence="1" type="primary">rpmB</name>
    <name type="ordered locus">SEN3550</name>
</gene>
<proteinExistence type="inferred from homology"/>
<accession>B5R5G1</accession>
<evidence type="ECO:0000255" key="1">
    <source>
        <dbReference type="HAMAP-Rule" id="MF_00373"/>
    </source>
</evidence>
<evidence type="ECO:0000305" key="2"/>
<comment type="similarity">
    <text evidence="1">Belongs to the bacterial ribosomal protein bL28 family.</text>
</comment>
<protein>
    <recommendedName>
        <fullName evidence="1">Large ribosomal subunit protein bL28</fullName>
    </recommendedName>
    <alternativeName>
        <fullName evidence="2">50S ribosomal protein L28</fullName>
    </alternativeName>
</protein>